<proteinExistence type="evidence at protein level"/>
<gene>
    <name type="primary">Rbm5</name>
</gene>
<feature type="chain" id="PRO_0000376805" description="RNA-binding protein 5">
    <location>
        <begin position="1"/>
        <end position="815"/>
    </location>
</feature>
<feature type="domain" description="RRM 1" evidence="5">
    <location>
        <begin position="98"/>
        <end position="178"/>
    </location>
</feature>
<feature type="domain" description="RRM 2" evidence="5">
    <location>
        <begin position="231"/>
        <end position="315"/>
    </location>
</feature>
<feature type="domain" description="G-patch" evidence="4">
    <location>
        <begin position="743"/>
        <end position="789"/>
    </location>
</feature>
<feature type="zinc finger region" description="RanBP2-type" evidence="6">
    <location>
        <begin position="181"/>
        <end position="210"/>
    </location>
</feature>
<feature type="zinc finger region" description="C2H2-type" evidence="3">
    <location>
        <begin position="647"/>
        <end position="672"/>
    </location>
</feature>
<feature type="region of interest" description="Disordered" evidence="7">
    <location>
        <begin position="1"/>
        <end position="93"/>
    </location>
</feature>
<feature type="region of interest" description="Required for interaction with U2AF2" evidence="1">
    <location>
        <begin position="321"/>
        <end position="809"/>
    </location>
</feature>
<feature type="region of interest" description="Disordered" evidence="7">
    <location>
        <begin position="407"/>
        <end position="468"/>
    </location>
</feature>
<feature type="region of interest" description="Sufficient for interaction with ACIN1, PRPF8, SFRS3, SNRPB, SNRPN, SNRNP70 and SNRNP200" evidence="1">
    <location>
        <begin position="452"/>
        <end position="535"/>
    </location>
</feature>
<feature type="region of interest" description="Disordered" evidence="7">
    <location>
        <begin position="508"/>
        <end position="540"/>
    </location>
</feature>
<feature type="compositionally biased region" description="Polar residues" evidence="7">
    <location>
        <begin position="411"/>
        <end position="422"/>
    </location>
</feature>
<feature type="compositionally biased region" description="Low complexity" evidence="7">
    <location>
        <begin position="426"/>
        <end position="446"/>
    </location>
</feature>
<feature type="compositionally biased region" description="Polar residues" evidence="7">
    <location>
        <begin position="510"/>
        <end position="519"/>
    </location>
</feature>
<feature type="modified residue" description="Phosphoserine" evidence="2">
    <location>
        <position position="18"/>
    </location>
</feature>
<feature type="modified residue" description="Phosphoserine" evidence="9">
    <location>
        <position position="59"/>
    </location>
</feature>
<feature type="modified residue" description="Phosphoserine" evidence="2">
    <location>
        <position position="69"/>
    </location>
</feature>
<feature type="modified residue" description="Phosphoserine" evidence="2">
    <location>
        <position position="72"/>
    </location>
</feature>
<feature type="modified residue" description="Phosphoserine" evidence="9">
    <location>
        <position position="78"/>
    </location>
</feature>
<feature type="modified residue" description="Phosphoserine" evidence="2">
    <location>
        <position position="444"/>
    </location>
</feature>
<feature type="modified residue" description="Phosphoserine" evidence="9">
    <location>
        <position position="621"/>
    </location>
</feature>
<feature type="modified residue" description="Phosphoserine" evidence="9">
    <location>
        <position position="624"/>
    </location>
</feature>
<name>RBM5_RAT</name>
<reference key="1">
    <citation type="submission" date="2005-09" db="EMBL/GenBank/DDBJ databases">
        <authorList>
            <person name="Mural R.J."/>
            <person name="Adams M.D."/>
            <person name="Myers E.W."/>
            <person name="Smith H.O."/>
            <person name="Venter J.C."/>
        </authorList>
    </citation>
    <scope>NUCLEOTIDE SEQUENCE [LARGE SCALE GENOMIC DNA]</scope>
</reference>
<reference key="2">
    <citation type="journal article" date="2004" name="Genome Res.">
        <title>The status, quality, and expansion of the NIH full-length cDNA project: the Mammalian Gene Collection (MGC).</title>
        <authorList>
            <consortium name="The MGC Project Team"/>
        </authorList>
    </citation>
    <scope>NUCLEOTIDE SEQUENCE [LARGE SCALE MRNA]</scope>
    <source>
        <tissue>Spleen</tissue>
    </source>
</reference>
<reference key="3">
    <citation type="journal article" date="2012" name="Nat. Commun.">
        <title>Quantitative maps of protein phosphorylation sites across 14 different rat organs and tissues.</title>
        <authorList>
            <person name="Lundby A."/>
            <person name="Secher A."/>
            <person name="Lage K."/>
            <person name="Nordsborg N.B."/>
            <person name="Dmytriyev A."/>
            <person name="Lundby C."/>
            <person name="Olsen J.V."/>
        </authorList>
    </citation>
    <scope>PHOSPHORYLATION [LARGE SCALE ANALYSIS] AT SER-59; SER-78; SER-621 AND SER-624</scope>
    <scope>IDENTIFICATION BY MASS SPECTROMETRY [LARGE SCALE ANALYSIS]</scope>
</reference>
<sequence length="815" mass="92352">MGSDKRVSRTERSGRYGSIIDRDDRDERESRSRRRDSDYKRSSDDRRGDRYDDYRDYDSPERERERRNSDRSEDGYHSDGDYGEHDYRHDISDERESKTIMLRGLPITITESDIREMMESFEGPQPADVRLMKRKTGVSRGFAFVEFYHLQDATSWMEANQKKLVIQGKHIAMHYSNPRPKFEDWLCNKCCLNNFRKRLKCFRCGADKFDSEQEVPPGTTESVQSVDYYCDTIILRNIAPHTVVDSIMTALSPYASLAVNNIRLIKDKQTQQNRGFAFVQLSSAMDASQLLQILQSLHPPLKIDGKTIGVDFAKSARKDLVLPDGNRVSAFSVASTAIAAAQWSSTQSQSGEGGNVDYSYMQPGQDGYTQYTQYSQDYQQFYQQQTGGLESDASATSGTTVTTTSAAVVSQSPQLYNQTSNPPGSPTEEAQPSTSTSTQAPAASPTGVVPGTKYAVPDTSTYQYDESSGYYYDPTTGLYYDPNSQYYYNSLTQQYLYWDGEKETYVPAAESSSNQQAGLPSTKEGKEKKEKPKSKTAQQIAKDMERWAKSLNKQKENFKNSFQPVNSLREEERRESAAADAGFALFEKKGALAERQQLIPELVRNGDEENPLKRGLVAAYSGDSDNEEELVERLESEEEKLADWKKMACLLCRRQFPNRDALVRHQQLSDLHKQNMDIYRRSRLSEQELEALELREREMKYRDRAAERREKYGIPEPPEPKRKKQFDAGTVNYEQPTKDGIDHSNIGNKMLQAMGWREGSGLGRKCQGITAPIEAQVRLKGAGLGAKGSAYGLSGADSYKDAVRKAMFARFTEME</sequence>
<protein>
    <recommendedName>
        <fullName>RNA-binding protein 5</fullName>
    </recommendedName>
    <alternativeName>
        <fullName>RNA-binding motif protein 5</fullName>
    </alternativeName>
</protein>
<evidence type="ECO:0000250" key="1"/>
<evidence type="ECO:0000250" key="2">
    <source>
        <dbReference type="UniProtKB" id="P52756"/>
    </source>
</evidence>
<evidence type="ECO:0000255" key="3">
    <source>
        <dbReference type="PROSITE-ProRule" id="PRU00042"/>
    </source>
</evidence>
<evidence type="ECO:0000255" key="4">
    <source>
        <dbReference type="PROSITE-ProRule" id="PRU00092"/>
    </source>
</evidence>
<evidence type="ECO:0000255" key="5">
    <source>
        <dbReference type="PROSITE-ProRule" id="PRU00176"/>
    </source>
</evidence>
<evidence type="ECO:0000255" key="6">
    <source>
        <dbReference type="PROSITE-ProRule" id="PRU00322"/>
    </source>
</evidence>
<evidence type="ECO:0000256" key="7">
    <source>
        <dbReference type="SAM" id="MobiDB-lite"/>
    </source>
</evidence>
<evidence type="ECO:0000305" key="8"/>
<evidence type="ECO:0007744" key="9">
    <source>
    </source>
</evidence>
<accession>B2GV05</accession>
<organism>
    <name type="scientific">Rattus norvegicus</name>
    <name type="common">Rat</name>
    <dbReference type="NCBI Taxonomy" id="10116"/>
    <lineage>
        <taxon>Eukaryota</taxon>
        <taxon>Metazoa</taxon>
        <taxon>Chordata</taxon>
        <taxon>Craniata</taxon>
        <taxon>Vertebrata</taxon>
        <taxon>Euteleostomi</taxon>
        <taxon>Mammalia</taxon>
        <taxon>Eutheria</taxon>
        <taxon>Euarchontoglires</taxon>
        <taxon>Glires</taxon>
        <taxon>Rodentia</taxon>
        <taxon>Myomorpha</taxon>
        <taxon>Muroidea</taxon>
        <taxon>Muridae</taxon>
        <taxon>Murinae</taxon>
        <taxon>Rattus</taxon>
    </lineage>
</organism>
<keyword id="KW-0053">Apoptosis</keyword>
<keyword id="KW-0479">Metal-binding</keyword>
<keyword id="KW-0507">mRNA processing</keyword>
<keyword id="KW-0508">mRNA splicing</keyword>
<keyword id="KW-0539">Nucleus</keyword>
<keyword id="KW-0597">Phosphoprotein</keyword>
<keyword id="KW-1185">Reference proteome</keyword>
<keyword id="KW-0677">Repeat</keyword>
<keyword id="KW-0694">RNA-binding</keyword>
<keyword id="KW-0747">Spliceosome</keyword>
<keyword id="KW-0862">Zinc</keyword>
<keyword id="KW-0863">Zinc-finger</keyword>
<dbReference type="EMBL" id="CH473954">
    <property type="protein sequence ID" value="EDL77217.1"/>
    <property type="molecule type" value="Genomic_DNA"/>
</dbReference>
<dbReference type="EMBL" id="BC166477">
    <property type="protein sequence ID" value="AAI66477.1"/>
    <property type="molecule type" value="mRNA"/>
</dbReference>
<dbReference type="RefSeq" id="NP_001094018.1">
    <property type="nucleotide sequence ID" value="NM_001100548.2"/>
</dbReference>
<dbReference type="RefSeq" id="NP_001420244.1">
    <property type="nucleotide sequence ID" value="NM_001433315.1"/>
</dbReference>
<dbReference type="RefSeq" id="NP_001420245.1">
    <property type="nucleotide sequence ID" value="NM_001433316.1"/>
</dbReference>
<dbReference type="RefSeq" id="XP_006243800.1">
    <property type="nucleotide sequence ID" value="XM_006243738.3"/>
</dbReference>
<dbReference type="RefSeq" id="XP_006243801.1">
    <property type="nucleotide sequence ID" value="XM_006243739.3"/>
</dbReference>
<dbReference type="RefSeq" id="XP_038937150.1">
    <property type="nucleotide sequence ID" value="XM_039081222.2"/>
</dbReference>
<dbReference type="BMRB" id="B2GV05"/>
<dbReference type="FunCoup" id="B2GV05">
    <property type="interactions" value="5087"/>
</dbReference>
<dbReference type="STRING" id="10116.ENSRNOP00000072378"/>
<dbReference type="iPTMnet" id="B2GV05"/>
<dbReference type="PhosphoSitePlus" id="B2GV05"/>
<dbReference type="jPOST" id="B2GV05"/>
<dbReference type="PaxDb" id="10116-ENSRNOP00000024529"/>
<dbReference type="PeptideAtlas" id="B2GV05"/>
<dbReference type="GeneID" id="300996"/>
<dbReference type="KEGG" id="rno:300996"/>
<dbReference type="UCSC" id="RGD:1305059">
    <property type="organism name" value="rat"/>
</dbReference>
<dbReference type="AGR" id="RGD:1305059"/>
<dbReference type="CTD" id="10181"/>
<dbReference type="RGD" id="1305059">
    <property type="gene designation" value="Rbm5"/>
</dbReference>
<dbReference type="VEuPathDB" id="HostDB:ENSRNOG00000018153"/>
<dbReference type="eggNOG" id="KOG0154">
    <property type="taxonomic scope" value="Eukaryota"/>
</dbReference>
<dbReference type="InParanoid" id="B2GV05"/>
<dbReference type="OrthoDB" id="29221at2759"/>
<dbReference type="PhylomeDB" id="B2GV05"/>
<dbReference type="TreeFam" id="TF315789"/>
<dbReference type="Reactome" id="R-RNO-72163">
    <property type="pathway name" value="mRNA Splicing - Major Pathway"/>
</dbReference>
<dbReference type="PRO" id="PR:B2GV05"/>
<dbReference type="Proteomes" id="UP000002494">
    <property type="component" value="Chromosome 8"/>
</dbReference>
<dbReference type="Proteomes" id="UP000234681">
    <property type="component" value="Chromosome 8"/>
</dbReference>
<dbReference type="Bgee" id="ENSRNOG00000018153">
    <property type="expression patterns" value="Expressed in thymus and 20 other cell types or tissues"/>
</dbReference>
<dbReference type="GO" id="GO:0005829">
    <property type="term" value="C:cytosol"/>
    <property type="evidence" value="ECO:0007669"/>
    <property type="project" value="Ensembl"/>
</dbReference>
<dbReference type="GO" id="GO:0005654">
    <property type="term" value="C:nucleoplasm"/>
    <property type="evidence" value="ECO:0007669"/>
    <property type="project" value="Ensembl"/>
</dbReference>
<dbReference type="GO" id="GO:0005634">
    <property type="term" value="C:nucleus"/>
    <property type="evidence" value="ECO:0000250"/>
    <property type="project" value="UniProtKB"/>
</dbReference>
<dbReference type="GO" id="GO:0005681">
    <property type="term" value="C:spliceosomal complex"/>
    <property type="evidence" value="ECO:0007669"/>
    <property type="project" value="UniProtKB-KW"/>
</dbReference>
<dbReference type="GO" id="GO:0003729">
    <property type="term" value="F:mRNA binding"/>
    <property type="evidence" value="ECO:0000250"/>
    <property type="project" value="UniProtKB"/>
</dbReference>
<dbReference type="GO" id="GO:0003723">
    <property type="term" value="F:RNA binding"/>
    <property type="evidence" value="ECO:0000318"/>
    <property type="project" value="GO_Central"/>
</dbReference>
<dbReference type="GO" id="GO:0008270">
    <property type="term" value="F:zinc ion binding"/>
    <property type="evidence" value="ECO:0007669"/>
    <property type="project" value="UniProtKB-KW"/>
</dbReference>
<dbReference type="GO" id="GO:0006915">
    <property type="term" value="P:apoptotic process"/>
    <property type="evidence" value="ECO:0007669"/>
    <property type="project" value="UniProtKB-KW"/>
</dbReference>
<dbReference type="GO" id="GO:0000398">
    <property type="term" value="P:mRNA splicing, via spliceosome"/>
    <property type="evidence" value="ECO:0000318"/>
    <property type="project" value="GO_Central"/>
</dbReference>
<dbReference type="GO" id="GO:0043065">
    <property type="term" value="P:positive regulation of apoptotic process"/>
    <property type="evidence" value="ECO:0000250"/>
    <property type="project" value="UniProtKB"/>
</dbReference>
<dbReference type="GO" id="GO:0000381">
    <property type="term" value="P:regulation of alternative mRNA splicing, via spliceosome"/>
    <property type="evidence" value="ECO:0000250"/>
    <property type="project" value="UniProtKB"/>
</dbReference>
<dbReference type="GO" id="GO:0000245">
    <property type="term" value="P:spliceosomal complex assembly"/>
    <property type="evidence" value="ECO:0000250"/>
    <property type="project" value="UniProtKB"/>
</dbReference>
<dbReference type="CDD" id="cd16168">
    <property type="entry name" value="OCRE_RBM5"/>
    <property type="match status" value="1"/>
</dbReference>
<dbReference type="CDD" id="cd12752">
    <property type="entry name" value="RRM1_RBM5"/>
    <property type="match status" value="1"/>
</dbReference>
<dbReference type="CDD" id="cd12755">
    <property type="entry name" value="RRM2_RBM5"/>
    <property type="match status" value="1"/>
</dbReference>
<dbReference type="FunFam" id="3.30.70.330:FF:000515">
    <property type="entry name" value="RNA-binding motif protein 5"/>
    <property type="match status" value="1"/>
</dbReference>
<dbReference type="FunFam" id="3.30.70.330:FF:000114">
    <property type="entry name" value="RNA-binding protein 10 isoform X1"/>
    <property type="match status" value="1"/>
</dbReference>
<dbReference type="Gene3D" id="3.30.70.330">
    <property type="match status" value="2"/>
</dbReference>
<dbReference type="Gene3D" id="4.10.1060.10">
    <property type="entry name" value="Zinc finger, RanBP2-type"/>
    <property type="match status" value="1"/>
</dbReference>
<dbReference type="InterPro" id="IPR000467">
    <property type="entry name" value="G_patch_dom"/>
</dbReference>
<dbReference type="InterPro" id="IPR012677">
    <property type="entry name" value="Nucleotide-bd_a/b_plait_sf"/>
</dbReference>
<dbReference type="InterPro" id="IPR041591">
    <property type="entry name" value="OCRE"/>
</dbReference>
<dbReference type="InterPro" id="IPR035979">
    <property type="entry name" value="RBD_domain_sf"/>
</dbReference>
<dbReference type="InterPro" id="IPR034991">
    <property type="entry name" value="RBM5_RRM1"/>
</dbReference>
<dbReference type="InterPro" id="IPR034993">
    <property type="entry name" value="RBM5_RRM2"/>
</dbReference>
<dbReference type="InterPro" id="IPR000504">
    <property type="entry name" value="RRM_dom"/>
</dbReference>
<dbReference type="InterPro" id="IPR013087">
    <property type="entry name" value="Znf_C2H2_type"/>
</dbReference>
<dbReference type="InterPro" id="IPR001876">
    <property type="entry name" value="Znf_RanBP2"/>
</dbReference>
<dbReference type="InterPro" id="IPR036443">
    <property type="entry name" value="Znf_RanBP2_sf"/>
</dbReference>
<dbReference type="PANTHER" id="PTHR13948">
    <property type="entry name" value="RNA-BINDING PROTEIN"/>
    <property type="match status" value="1"/>
</dbReference>
<dbReference type="PANTHER" id="PTHR13948:SF21">
    <property type="entry name" value="RNA-BINDING PROTEIN 5"/>
    <property type="match status" value="1"/>
</dbReference>
<dbReference type="Pfam" id="PF01585">
    <property type="entry name" value="G-patch"/>
    <property type="match status" value="1"/>
</dbReference>
<dbReference type="Pfam" id="PF17780">
    <property type="entry name" value="OCRE"/>
    <property type="match status" value="1"/>
</dbReference>
<dbReference type="Pfam" id="PF00076">
    <property type="entry name" value="RRM_1"/>
    <property type="match status" value="2"/>
</dbReference>
<dbReference type="Pfam" id="PF00641">
    <property type="entry name" value="Zn_ribbon_RanBP"/>
    <property type="match status" value="1"/>
</dbReference>
<dbReference type="SMART" id="SM00443">
    <property type="entry name" value="G_patch"/>
    <property type="match status" value="1"/>
</dbReference>
<dbReference type="SMART" id="SM00360">
    <property type="entry name" value="RRM"/>
    <property type="match status" value="2"/>
</dbReference>
<dbReference type="SMART" id="SM00547">
    <property type="entry name" value="ZnF_RBZ"/>
    <property type="match status" value="1"/>
</dbReference>
<dbReference type="SUPFAM" id="SSF90209">
    <property type="entry name" value="Ran binding protein zinc finger-like"/>
    <property type="match status" value="1"/>
</dbReference>
<dbReference type="SUPFAM" id="SSF54928">
    <property type="entry name" value="RNA-binding domain, RBD"/>
    <property type="match status" value="2"/>
</dbReference>
<dbReference type="PROSITE" id="PS50174">
    <property type="entry name" value="G_PATCH"/>
    <property type="match status" value="1"/>
</dbReference>
<dbReference type="PROSITE" id="PS50102">
    <property type="entry name" value="RRM"/>
    <property type="match status" value="2"/>
</dbReference>
<dbReference type="PROSITE" id="PS01358">
    <property type="entry name" value="ZF_RANBP2_1"/>
    <property type="match status" value="1"/>
</dbReference>
<dbReference type="PROSITE" id="PS50199">
    <property type="entry name" value="ZF_RANBP2_2"/>
    <property type="match status" value="1"/>
</dbReference>
<dbReference type="PROSITE" id="PS50157">
    <property type="entry name" value="ZINC_FINGER_C2H2_2"/>
    <property type="match status" value="1"/>
</dbReference>
<comment type="function">
    <text evidence="2">Component of the spliceosome A complex. Binds to ssRNA containing the consensus sequence 5'-AGGUAA-3' (By similarity). Regulates alternative splicing of a number of mRNAs. May modulate splice site pairing after recruitment of the U1 and U2 snRNPs to the 5' and 3' splice sites of the intron. May both positively and negatively regulate apoptosis by regulating the alternative splicing of several genes involved in this process, including FAS and CASP2/caspase-2. In the case of FAS, promotes production of a soluble form of FAS that inhibits apoptosis. In the case of CASP2/caspase-2, promotes production of a catalytically active form of CASP2/Caspase-2 that induces apoptosis (By similarity).</text>
</comment>
<comment type="subunit">
    <text evidence="1">Component of the spliceosome A complex (also known as the prespliceosome). Appears to dissociate from the spliceosome upon formation of the spliceosome B complex (also known as the precatalytic spliceosome), in which the heterotrimeric U4/U6.U5 snRNPs are bound. Interacts with U2AF2; this interaction is direct. Also interacts with ACIN1, PRPF8, SFRS3, SNRPB, SNRPN, SNRNP70 and SNRNP200; these interactions may be indirect (By similarity).</text>
</comment>
<comment type="subcellular location">
    <subcellularLocation>
        <location evidence="1">Nucleus</location>
    </subcellularLocation>
</comment>
<comment type="similarity">
    <text evidence="8">Belongs to the RBM5/RBM10 family.</text>
</comment>